<accession>Q0TKQ4</accession>
<reference key="1">
    <citation type="journal article" date="2006" name="Mol. Microbiol.">
        <title>Role of pathogenicity island-associated integrases in the genome plasticity of uropathogenic Escherichia coli strain 536.</title>
        <authorList>
            <person name="Hochhut B."/>
            <person name="Wilde C."/>
            <person name="Balling G."/>
            <person name="Middendorf B."/>
            <person name="Dobrindt U."/>
            <person name="Brzuszkiewicz E."/>
            <person name="Gottschalk G."/>
            <person name="Carniel E."/>
            <person name="Hacker J."/>
        </authorList>
    </citation>
    <scope>NUCLEOTIDE SEQUENCE [LARGE SCALE GENOMIC DNA]</scope>
    <source>
        <strain>536 / UPEC</strain>
    </source>
</reference>
<name>YAII_ECOL5</name>
<feature type="chain" id="PRO_1000014420" description="UPF0178 protein YaiI">
    <location>
        <begin position="1"/>
        <end position="152"/>
    </location>
</feature>
<gene>
    <name evidence="1" type="primary">yaiI</name>
    <name type="ordered locus">ECP_0446</name>
</gene>
<sequence>MTIWVDADACPNVIKEILYRAAERMQMPLVLVANQSLRVPPSRFIRTLRVAAGFDVADNEIVRQCEAGDLVITADIPLAAEAIEKGAAALNPRGERYTPATIRERLTMRDFMDTLRASGIQTGGPDSLSQRDRQAFAAELEKWWLEVQRSRG</sequence>
<comment type="similarity">
    <text evidence="1">Belongs to the UPF0178 family.</text>
</comment>
<protein>
    <recommendedName>
        <fullName evidence="1">UPF0178 protein YaiI</fullName>
    </recommendedName>
</protein>
<evidence type="ECO:0000255" key="1">
    <source>
        <dbReference type="HAMAP-Rule" id="MF_00489"/>
    </source>
</evidence>
<dbReference type="EMBL" id="CP000247">
    <property type="protein sequence ID" value="ABG68477.1"/>
    <property type="molecule type" value="Genomic_DNA"/>
</dbReference>
<dbReference type="RefSeq" id="WP_000158159.1">
    <property type="nucleotide sequence ID" value="NC_008253.1"/>
</dbReference>
<dbReference type="KEGG" id="ecp:ECP_0446"/>
<dbReference type="HOGENOM" id="CLU_106619_2_1_6"/>
<dbReference type="Proteomes" id="UP000009182">
    <property type="component" value="Chromosome"/>
</dbReference>
<dbReference type="CDD" id="cd18720">
    <property type="entry name" value="PIN_YqxD-like"/>
    <property type="match status" value="1"/>
</dbReference>
<dbReference type="HAMAP" id="MF_00489">
    <property type="entry name" value="UPF0178"/>
    <property type="match status" value="1"/>
</dbReference>
<dbReference type="InterPro" id="IPR003791">
    <property type="entry name" value="UPF0178"/>
</dbReference>
<dbReference type="NCBIfam" id="NF001095">
    <property type="entry name" value="PRK00124.1"/>
    <property type="match status" value="1"/>
</dbReference>
<dbReference type="PANTHER" id="PTHR35146">
    <property type="entry name" value="UPF0178 PROTEIN YAII"/>
    <property type="match status" value="1"/>
</dbReference>
<dbReference type="PANTHER" id="PTHR35146:SF1">
    <property type="entry name" value="UPF0178 PROTEIN YAII"/>
    <property type="match status" value="1"/>
</dbReference>
<dbReference type="Pfam" id="PF02639">
    <property type="entry name" value="DUF188"/>
    <property type="match status" value="1"/>
</dbReference>
<organism>
    <name type="scientific">Escherichia coli O6:K15:H31 (strain 536 / UPEC)</name>
    <dbReference type="NCBI Taxonomy" id="362663"/>
    <lineage>
        <taxon>Bacteria</taxon>
        <taxon>Pseudomonadati</taxon>
        <taxon>Pseudomonadota</taxon>
        <taxon>Gammaproteobacteria</taxon>
        <taxon>Enterobacterales</taxon>
        <taxon>Enterobacteriaceae</taxon>
        <taxon>Escherichia</taxon>
    </lineage>
</organism>
<proteinExistence type="inferred from homology"/>